<comment type="function">
    <text evidence="1">Removes the formyl group from the N-terminal Met of newly synthesized proteins. Requires at least a dipeptide for an efficient rate of reaction. N-terminal L-methionine is a prerequisite for activity but the enzyme has broad specificity at other positions.</text>
</comment>
<comment type="catalytic activity">
    <reaction evidence="1">
        <text>N-terminal N-formyl-L-methionyl-[peptide] + H2O = N-terminal L-methionyl-[peptide] + formate</text>
        <dbReference type="Rhea" id="RHEA:24420"/>
        <dbReference type="Rhea" id="RHEA-COMP:10639"/>
        <dbReference type="Rhea" id="RHEA-COMP:10640"/>
        <dbReference type="ChEBI" id="CHEBI:15377"/>
        <dbReference type="ChEBI" id="CHEBI:15740"/>
        <dbReference type="ChEBI" id="CHEBI:49298"/>
        <dbReference type="ChEBI" id="CHEBI:64731"/>
        <dbReference type="EC" id="3.5.1.88"/>
    </reaction>
</comment>
<comment type="cofactor">
    <cofactor evidence="1">
        <name>Fe(2+)</name>
        <dbReference type="ChEBI" id="CHEBI:29033"/>
    </cofactor>
    <text evidence="1">Binds 1 Fe(2+) ion.</text>
</comment>
<comment type="similarity">
    <text evidence="1">Belongs to the polypeptide deformylase family.</text>
</comment>
<accession>Q8NZB7</accession>
<proteinExistence type="inferred from homology"/>
<dbReference type="EC" id="3.5.1.88" evidence="1"/>
<dbReference type="EMBL" id="AE009949">
    <property type="protein sequence ID" value="AAL98503.1"/>
    <property type="molecule type" value="Genomic_DNA"/>
</dbReference>
<dbReference type="RefSeq" id="WP_011018241.1">
    <property type="nucleotide sequence ID" value="NC_003485.1"/>
</dbReference>
<dbReference type="SMR" id="Q8NZB7"/>
<dbReference type="KEGG" id="spm:spyM18_2025"/>
<dbReference type="HOGENOM" id="CLU_061901_4_0_9"/>
<dbReference type="GO" id="GO:0046872">
    <property type="term" value="F:metal ion binding"/>
    <property type="evidence" value="ECO:0007669"/>
    <property type="project" value="UniProtKB-KW"/>
</dbReference>
<dbReference type="GO" id="GO:0042586">
    <property type="term" value="F:peptide deformylase activity"/>
    <property type="evidence" value="ECO:0007669"/>
    <property type="project" value="UniProtKB-UniRule"/>
</dbReference>
<dbReference type="GO" id="GO:0043686">
    <property type="term" value="P:co-translational protein modification"/>
    <property type="evidence" value="ECO:0007669"/>
    <property type="project" value="TreeGrafter"/>
</dbReference>
<dbReference type="GO" id="GO:0006412">
    <property type="term" value="P:translation"/>
    <property type="evidence" value="ECO:0007669"/>
    <property type="project" value="UniProtKB-UniRule"/>
</dbReference>
<dbReference type="CDD" id="cd00487">
    <property type="entry name" value="Pep_deformylase"/>
    <property type="match status" value="1"/>
</dbReference>
<dbReference type="FunFam" id="3.90.45.10:FF:000002">
    <property type="entry name" value="Peptide deformylase"/>
    <property type="match status" value="1"/>
</dbReference>
<dbReference type="Gene3D" id="3.90.45.10">
    <property type="entry name" value="Peptide deformylase"/>
    <property type="match status" value="1"/>
</dbReference>
<dbReference type="HAMAP" id="MF_00163">
    <property type="entry name" value="Pep_deformylase"/>
    <property type="match status" value="1"/>
</dbReference>
<dbReference type="InterPro" id="IPR023635">
    <property type="entry name" value="Peptide_deformylase"/>
</dbReference>
<dbReference type="InterPro" id="IPR036821">
    <property type="entry name" value="Peptide_deformylase_sf"/>
</dbReference>
<dbReference type="NCBIfam" id="TIGR00079">
    <property type="entry name" value="pept_deformyl"/>
    <property type="match status" value="1"/>
</dbReference>
<dbReference type="PANTHER" id="PTHR10458">
    <property type="entry name" value="PEPTIDE DEFORMYLASE"/>
    <property type="match status" value="1"/>
</dbReference>
<dbReference type="PANTHER" id="PTHR10458:SF8">
    <property type="entry name" value="PEPTIDE DEFORMYLASE 2"/>
    <property type="match status" value="1"/>
</dbReference>
<dbReference type="Pfam" id="PF01327">
    <property type="entry name" value="Pep_deformylase"/>
    <property type="match status" value="1"/>
</dbReference>
<dbReference type="PIRSF" id="PIRSF004749">
    <property type="entry name" value="Pep_def"/>
    <property type="match status" value="1"/>
</dbReference>
<dbReference type="PRINTS" id="PR01576">
    <property type="entry name" value="PDEFORMYLASE"/>
</dbReference>
<dbReference type="SUPFAM" id="SSF56420">
    <property type="entry name" value="Peptide deformylase"/>
    <property type="match status" value="1"/>
</dbReference>
<organism>
    <name type="scientific">Streptococcus pyogenes serotype M18 (strain MGAS8232)</name>
    <dbReference type="NCBI Taxonomy" id="186103"/>
    <lineage>
        <taxon>Bacteria</taxon>
        <taxon>Bacillati</taxon>
        <taxon>Bacillota</taxon>
        <taxon>Bacilli</taxon>
        <taxon>Lactobacillales</taxon>
        <taxon>Streptococcaceae</taxon>
        <taxon>Streptococcus</taxon>
    </lineage>
</organism>
<keyword id="KW-0378">Hydrolase</keyword>
<keyword id="KW-0408">Iron</keyword>
<keyword id="KW-0479">Metal-binding</keyword>
<keyword id="KW-0648">Protein biosynthesis</keyword>
<evidence type="ECO:0000255" key="1">
    <source>
        <dbReference type="HAMAP-Rule" id="MF_00163"/>
    </source>
</evidence>
<name>DEF_STRP8</name>
<gene>
    <name evidence="1" type="primary">def</name>
    <name type="ordered locus">spyM18_2025</name>
</gene>
<feature type="chain" id="PRO_0000082862" description="Peptide deformylase">
    <location>
        <begin position="1"/>
        <end position="204"/>
    </location>
</feature>
<feature type="active site" evidence="1">
    <location>
        <position position="175"/>
    </location>
</feature>
<feature type="binding site" evidence="1">
    <location>
        <position position="131"/>
    </location>
    <ligand>
        <name>Fe cation</name>
        <dbReference type="ChEBI" id="CHEBI:24875"/>
    </ligand>
</feature>
<feature type="binding site" evidence="1">
    <location>
        <position position="174"/>
    </location>
    <ligand>
        <name>Fe cation</name>
        <dbReference type="ChEBI" id="CHEBI:24875"/>
    </ligand>
</feature>
<feature type="binding site" evidence="1">
    <location>
        <position position="178"/>
    </location>
    <ligand>
        <name>Fe cation</name>
        <dbReference type="ChEBI" id="CHEBI:24875"/>
    </ligand>
</feature>
<reference key="1">
    <citation type="journal article" date="2002" name="Proc. Natl. Acad. Sci. U.S.A.">
        <title>Genome sequence and comparative microarray analysis of serotype M18 group A Streptococcus strains associated with acute rheumatic fever outbreaks.</title>
        <authorList>
            <person name="Smoot J.C."/>
            <person name="Barbian K.D."/>
            <person name="Van Gompel J.J."/>
            <person name="Smoot L.M."/>
            <person name="Chaussee M.S."/>
            <person name="Sylva G.L."/>
            <person name="Sturdevant D.E."/>
            <person name="Ricklefs S.M."/>
            <person name="Porcella S.F."/>
            <person name="Parkins L.D."/>
            <person name="Beres S.B."/>
            <person name="Campbell D.S."/>
            <person name="Smith T.M."/>
            <person name="Zhang Q."/>
            <person name="Kapur V."/>
            <person name="Daly J.A."/>
            <person name="Veasy L.G."/>
            <person name="Musser J.M."/>
        </authorList>
    </citation>
    <scope>NUCLEOTIDE SEQUENCE [LARGE SCALE GENOMIC DNA]</scope>
    <source>
        <strain>MGAS8232</strain>
    </source>
</reference>
<protein>
    <recommendedName>
        <fullName evidence="1">Peptide deformylase</fullName>
        <shortName evidence="1">PDF</shortName>
        <ecNumber evidence="1">3.5.1.88</ecNumber>
    </recommendedName>
    <alternativeName>
        <fullName evidence="1">Polypeptide deformylase</fullName>
    </alternativeName>
</protein>
<sequence>MSAQDKLIKPSHLITMDDIIREGNPTLRAVAKEVSLPLCDEDILLGEKMMQFLKHSQDPVMAEKLGLRAGVGLAAPQIDVSKRIIAVLVPNLPDKEGNPPKEAYSWQEVLYNPKIVSHSVQDAALSDGEGCLSVDRVVEGYVVRHARVTVDYYDKEGQQHRIKLKGYNAIVVQHEIDHINGILFYDRINAKNPFETKEELLILD</sequence>